<proteinExistence type="inferred from homology"/>
<reference key="1">
    <citation type="journal article" date="2009" name="Proc. Natl. Acad. Sci. U.S.A.">
        <title>Biogeography of the Sulfolobus islandicus pan-genome.</title>
        <authorList>
            <person name="Reno M.L."/>
            <person name="Held N.L."/>
            <person name="Fields C.J."/>
            <person name="Burke P.V."/>
            <person name="Whitaker R.J."/>
        </authorList>
    </citation>
    <scope>NUCLEOTIDE SEQUENCE [LARGE SCALE GENOMIC DNA]</scope>
    <source>
        <strain>M.16.27</strain>
    </source>
</reference>
<keyword id="KW-0030">Aminoacyl-tRNA synthetase</keyword>
<keyword id="KW-0067">ATP-binding</keyword>
<keyword id="KW-0963">Cytoplasm</keyword>
<keyword id="KW-0436">Ligase</keyword>
<keyword id="KW-0479">Metal-binding</keyword>
<keyword id="KW-0547">Nucleotide-binding</keyword>
<keyword id="KW-0648">Protein biosynthesis</keyword>
<keyword id="KW-0694">RNA-binding</keyword>
<keyword id="KW-0820">tRNA-binding</keyword>
<keyword id="KW-0862">Zinc</keyword>
<protein>
    <recommendedName>
        <fullName evidence="1">Alanine--tRNA ligase</fullName>
        <ecNumber evidence="1">6.1.1.7</ecNumber>
    </recommendedName>
    <alternativeName>
        <fullName evidence="1">Alanyl-tRNA synthetase</fullName>
        <shortName evidence="1">AlaRS</shortName>
    </alternativeName>
</protein>
<comment type="function">
    <text evidence="1">Catalyzes the attachment of alanine to tRNA(Ala) in a two-step reaction: alanine is first activated by ATP to form Ala-AMP and then transferred to the acceptor end of tRNA(Ala). Also edits incorrectly charged Ser-tRNA(Ala) and Gly-tRNA(Ala) via its editing domain.</text>
</comment>
<comment type="catalytic activity">
    <reaction evidence="1">
        <text>tRNA(Ala) + L-alanine + ATP = L-alanyl-tRNA(Ala) + AMP + diphosphate</text>
        <dbReference type="Rhea" id="RHEA:12540"/>
        <dbReference type="Rhea" id="RHEA-COMP:9657"/>
        <dbReference type="Rhea" id="RHEA-COMP:9923"/>
        <dbReference type="ChEBI" id="CHEBI:30616"/>
        <dbReference type="ChEBI" id="CHEBI:33019"/>
        <dbReference type="ChEBI" id="CHEBI:57972"/>
        <dbReference type="ChEBI" id="CHEBI:78442"/>
        <dbReference type="ChEBI" id="CHEBI:78497"/>
        <dbReference type="ChEBI" id="CHEBI:456215"/>
        <dbReference type="EC" id="6.1.1.7"/>
    </reaction>
</comment>
<comment type="cofactor">
    <cofactor evidence="1">
        <name>Zn(2+)</name>
        <dbReference type="ChEBI" id="CHEBI:29105"/>
    </cofactor>
    <text evidence="1">Binds 1 zinc ion per subunit.</text>
</comment>
<comment type="subcellular location">
    <subcellularLocation>
        <location evidence="1">Cytoplasm</location>
    </subcellularLocation>
</comment>
<comment type="domain">
    <text evidence="1">Consists of three domains; the N-terminal catalytic domain, the editing domain and the C-terminal C-Ala domain. The editing domain removes incorrectly charged amino acids, while the C-Ala domain, along with tRNA(Ala), serves as a bridge to cooperatively bring together the editing and aminoacylation centers thus stimulating deacylation of misacylated tRNAs.</text>
</comment>
<comment type="similarity">
    <text evidence="1">Belongs to the class-II aminoacyl-tRNA synthetase family.</text>
</comment>
<name>SYA_SACI3</name>
<evidence type="ECO:0000255" key="1">
    <source>
        <dbReference type="HAMAP-Rule" id="MF_00036"/>
    </source>
</evidence>
<organism>
    <name type="scientific">Saccharolobus islandicus (strain M.16.27)</name>
    <name type="common">Sulfolobus islandicus</name>
    <dbReference type="NCBI Taxonomy" id="427318"/>
    <lineage>
        <taxon>Archaea</taxon>
        <taxon>Thermoproteota</taxon>
        <taxon>Thermoprotei</taxon>
        <taxon>Sulfolobales</taxon>
        <taxon>Sulfolobaceae</taxon>
        <taxon>Saccharolobus</taxon>
    </lineage>
</organism>
<dbReference type="EC" id="6.1.1.7" evidence="1"/>
<dbReference type="EMBL" id="CP001401">
    <property type="protein sequence ID" value="ACP55754.1"/>
    <property type="molecule type" value="Genomic_DNA"/>
</dbReference>
<dbReference type="RefSeq" id="WP_012718969.1">
    <property type="nucleotide sequence ID" value="NC_012632.1"/>
</dbReference>
<dbReference type="SMR" id="C3MZC2"/>
<dbReference type="GeneID" id="84059166"/>
<dbReference type="KEGG" id="sim:M1627_1883"/>
<dbReference type="HOGENOM" id="CLU_004485_4_0_2"/>
<dbReference type="Proteomes" id="UP000002307">
    <property type="component" value="Chromosome"/>
</dbReference>
<dbReference type="GO" id="GO:0005737">
    <property type="term" value="C:cytoplasm"/>
    <property type="evidence" value="ECO:0007669"/>
    <property type="project" value="UniProtKB-SubCell"/>
</dbReference>
<dbReference type="GO" id="GO:0004813">
    <property type="term" value="F:alanine-tRNA ligase activity"/>
    <property type="evidence" value="ECO:0007669"/>
    <property type="project" value="UniProtKB-UniRule"/>
</dbReference>
<dbReference type="GO" id="GO:0002161">
    <property type="term" value="F:aminoacyl-tRNA deacylase activity"/>
    <property type="evidence" value="ECO:0007669"/>
    <property type="project" value="TreeGrafter"/>
</dbReference>
<dbReference type="GO" id="GO:0005524">
    <property type="term" value="F:ATP binding"/>
    <property type="evidence" value="ECO:0007669"/>
    <property type="project" value="UniProtKB-UniRule"/>
</dbReference>
<dbReference type="GO" id="GO:0000049">
    <property type="term" value="F:tRNA binding"/>
    <property type="evidence" value="ECO:0007669"/>
    <property type="project" value="UniProtKB-KW"/>
</dbReference>
<dbReference type="GO" id="GO:0008270">
    <property type="term" value="F:zinc ion binding"/>
    <property type="evidence" value="ECO:0007669"/>
    <property type="project" value="UniProtKB-UniRule"/>
</dbReference>
<dbReference type="GO" id="GO:0006419">
    <property type="term" value="P:alanyl-tRNA aminoacylation"/>
    <property type="evidence" value="ECO:0007669"/>
    <property type="project" value="UniProtKB-UniRule"/>
</dbReference>
<dbReference type="CDD" id="cd00673">
    <property type="entry name" value="AlaRS_core"/>
    <property type="match status" value="1"/>
</dbReference>
<dbReference type="FunFam" id="3.30.54.20:FF:000004">
    <property type="entry name" value="Alanine--tRNA ligase"/>
    <property type="match status" value="1"/>
</dbReference>
<dbReference type="FunFam" id="3.30.930.10:FF:000056">
    <property type="entry name" value="Alanine--tRNA ligase"/>
    <property type="match status" value="1"/>
</dbReference>
<dbReference type="FunFam" id="3.30.980.10:FF:000004">
    <property type="entry name" value="Alanine--tRNA ligase, cytoplasmic"/>
    <property type="match status" value="1"/>
</dbReference>
<dbReference type="Gene3D" id="2.40.30.130">
    <property type="match status" value="1"/>
</dbReference>
<dbReference type="Gene3D" id="3.30.54.20">
    <property type="match status" value="1"/>
</dbReference>
<dbReference type="Gene3D" id="3.30.930.10">
    <property type="entry name" value="Bira Bifunctional Protein, Domain 2"/>
    <property type="match status" value="1"/>
</dbReference>
<dbReference type="Gene3D" id="3.30.980.10">
    <property type="entry name" value="Threonyl-trna Synthetase, Chain A, domain 2"/>
    <property type="match status" value="1"/>
</dbReference>
<dbReference type="HAMAP" id="MF_00036_A">
    <property type="entry name" value="Ala_tRNA_synth_A"/>
    <property type="match status" value="1"/>
</dbReference>
<dbReference type="InterPro" id="IPR045864">
    <property type="entry name" value="aa-tRNA-synth_II/BPL/LPL"/>
</dbReference>
<dbReference type="InterPro" id="IPR002318">
    <property type="entry name" value="Ala-tRNA-lgiase_IIc"/>
</dbReference>
<dbReference type="InterPro" id="IPR018162">
    <property type="entry name" value="Ala-tRNA-ligase_IIc_anticod-bd"/>
</dbReference>
<dbReference type="InterPro" id="IPR018165">
    <property type="entry name" value="Ala-tRNA-synth_IIc_core"/>
</dbReference>
<dbReference type="InterPro" id="IPR018164">
    <property type="entry name" value="Ala-tRNA-synth_IIc_N"/>
</dbReference>
<dbReference type="InterPro" id="IPR022429">
    <property type="entry name" value="Ala-tRNA_lgiase_arc"/>
</dbReference>
<dbReference type="InterPro" id="IPR050058">
    <property type="entry name" value="Ala-tRNA_ligase"/>
</dbReference>
<dbReference type="InterPro" id="IPR018163">
    <property type="entry name" value="Thr/Ala-tRNA-synth_IIc_edit"/>
</dbReference>
<dbReference type="InterPro" id="IPR009000">
    <property type="entry name" value="Transl_B-barrel_sf"/>
</dbReference>
<dbReference type="InterPro" id="IPR012947">
    <property type="entry name" value="tRNA_SAD"/>
</dbReference>
<dbReference type="NCBIfam" id="TIGR03683">
    <property type="entry name" value="A-tRNA_syn_arch"/>
    <property type="match status" value="1"/>
</dbReference>
<dbReference type="NCBIfam" id="TIGR00344">
    <property type="entry name" value="alaS"/>
    <property type="match status" value="1"/>
</dbReference>
<dbReference type="PANTHER" id="PTHR11777:SF9">
    <property type="entry name" value="ALANINE--TRNA LIGASE, CYTOPLASMIC"/>
    <property type="match status" value="1"/>
</dbReference>
<dbReference type="PANTHER" id="PTHR11777">
    <property type="entry name" value="ALANYL-TRNA SYNTHETASE"/>
    <property type="match status" value="1"/>
</dbReference>
<dbReference type="Pfam" id="PF01411">
    <property type="entry name" value="tRNA-synt_2c"/>
    <property type="match status" value="1"/>
</dbReference>
<dbReference type="Pfam" id="PF07973">
    <property type="entry name" value="tRNA_SAD"/>
    <property type="match status" value="1"/>
</dbReference>
<dbReference type="PRINTS" id="PR00980">
    <property type="entry name" value="TRNASYNTHALA"/>
</dbReference>
<dbReference type="SMART" id="SM00863">
    <property type="entry name" value="tRNA_SAD"/>
    <property type="match status" value="1"/>
</dbReference>
<dbReference type="SUPFAM" id="SSF55681">
    <property type="entry name" value="Class II aaRS and biotin synthetases"/>
    <property type="match status" value="1"/>
</dbReference>
<dbReference type="SUPFAM" id="SSF101353">
    <property type="entry name" value="Putative anticodon-binding domain of alanyl-tRNA synthetase (AlaRS)"/>
    <property type="match status" value="1"/>
</dbReference>
<dbReference type="SUPFAM" id="SSF55186">
    <property type="entry name" value="ThrRS/AlaRS common domain"/>
    <property type="match status" value="1"/>
</dbReference>
<dbReference type="SUPFAM" id="SSF50447">
    <property type="entry name" value="Translation proteins"/>
    <property type="match status" value="1"/>
</dbReference>
<dbReference type="PROSITE" id="PS50860">
    <property type="entry name" value="AA_TRNA_LIGASE_II_ALA"/>
    <property type="match status" value="1"/>
</dbReference>
<gene>
    <name evidence="1" type="primary">alaS</name>
    <name type="ordered locus">M1627_1883</name>
</gene>
<sequence>MKASEEEYRLNFFIKNDFKRKICKSCKTPFWTRDEKKEYCSDIPCTDYYFFDINIKSQPLTVKEAREKFLSFFEKRGHTRISPKPVLARWREDLYLTIASIVDFQPHVTSGLVPPPANPLVVSQPSIRLEDIDNVGITFGRHLTTFEMAAHHAFNYPDHYVYWKEETTAYATEFFTKELGIPEEELNFKESWWEGGGNAGPCLEVTVGGLELATLVFMQYKITDNGNYTPLKLKIVDTGYGVERIAWITQKTPSAFHAIYGNLVYKFFNKIGVAYIDETLLKVASRFAGKIDPDNPDTIKIHRQMVSKELGIDIKAVEEELDRAAKVFQILDHTKTIMLMLADGLVPSNSGEGYLGRLVIRRALKVLRLLKSDVRLYELVKEQIDFWKEDFPQVLKNKDYILDAVELEQQRFEKILEKVPSIASTLARKSEITTEDLIQVYDSNGIPPDLLEEELKKKSVKFELPRNFYALVAKRHQTSTIKSAYDKVKLPKDMLEYITALQPTEKLYYKDQYMRSFEGKVLGVYKNYLILDKTTFYPEGGGQLGDTGLIIDEKSSKRYEVIDTQKVNDVIVHILKEEPSTIKVGDNVRGEINWERRYRLMRHHTVTHVILAAAKKVLGEHVWQAGAEKTPEKGRLDITHHKTLTEEEVKLIENYANSVISDRRPVKPLEMNRMEAEMKYGVSIYEGGVPNSATIRLLEIKDWDIESCGGTHVSNTSEIGAVKIINVERIQDGVIRLEYVAGPALVDYIRETEAKIVEASKIIGSSPDQLTSRLRRILNEIEEKNNLIIQYRRIIETELLNNLKPYEINGNKIYIIEGLGDEEENKEILRKLTSTDNTIAISISDNRLQIATSKNMRVDKIVEELLKGGGKGGGKGTFANVILNSKKSKEEIIEIVRKSL</sequence>
<feature type="chain" id="PRO_1000202046" description="Alanine--tRNA ligase">
    <location>
        <begin position="1"/>
        <end position="900"/>
    </location>
</feature>
<feature type="binding site" evidence="1">
    <location>
        <position position="604"/>
    </location>
    <ligand>
        <name>Zn(2+)</name>
        <dbReference type="ChEBI" id="CHEBI:29105"/>
    </ligand>
</feature>
<feature type="binding site" evidence="1">
    <location>
        <position position="608"/>
    </location>
    <ligand>
        <name>Zn(2+)</name>
        <dbReference type="ChEBI" id="CHEBI:29105"/>
    </ligand>
</feature>
<feature type="binding site" evidence="1">
    <location>
        <position position="708"/>
    </location>
    <ligand>
        <name>Zn(2+)</name>
        <dbReference type="ChEBI" id="CHEBI:29105"/>
    </ligand>
</feature>
<feature type="binding site" evidence="1">
    <location>
        <position position="712"/>
    </location>
    <ligand>
        <name>Zn(2+)</name>
        <dbReference type="ChEBI" id="CHEBI:29105"/>
    </ligand>
</feature>
<accession>C3MZC2</accession>